<reference key="1">
    <citation type="journal article" date="2000" name="Nature">
        <title>Sequence and analysis of chromosome 3 of the plant Arabidopsis thaliana.</title>
        <authorList>
            <person name="Salanoubat M."/>
            <person name="Lemcke K."/>
            <person name="Rieger M."/>
            <person name="Ansorge W."/>
            <person name="Unseld M."/>
            <person name="Fartmann B."/>
            <person name="Valle G."/>
            <person name="Bloecker H."/>
            <person name="Perez-Alonso M."/>
            <person name="Obermaier B."/>
            <person name="Delseny M."/>
            <person name="Boutry M."/>
            <person name="Grivell L.A."/>
            <person name="Mache R."/>
            <person name="Puigdomenech P."/>
            <person name="De Simone V."/>
            <person name="Choisne N."/>
            <person name="Artiguenave F."/>
            <person name="Robert C."/>
            <person name="Brottier P."/>
            <person name="Wincker P."/>
            <person name="Cattolico L."/>
            <person name="Weissenbach J."/>
            <person name="Saurin W."/>
            <person name="Quetier F."/>
            <person name="Schaefer M."/>
            <person name="Mueller-Auer S."/>
            <person name="Gabel C."/>
            <person name="Fuchs M."/>
            <person name="Benes V."/>
            <person name="Wurmbach E."/>
            <person name="Drzonek H."/>
            <person name="Erfle H."/>
            <person name="Jordan N."/>
            <person name="Bangert S."/>
            <person name="Wiedelmann R."/>
            <person name="Kranz H."/>
            <person name="Voss H."/>
            <person name="Holland R."/>
            <person name="Brandt P."/>
            <person name="Nyakatura G."/>
            <person name="Vezzi A."/>
            <person name="D'Angelo M."/>
            <person name="Pallavicini A."/>
            <person name="Toppo S."/>
            <person name="Simionati B."/>
            <person name="Conrad A."/>
            <person name="Hornischer K."/>
            <person name="Kauer G."/>
            <person name="Loehnert T.-H."/>
            <person name="Nordsiek G."/>
            <person name="Reichelt J."/>
            <person name="Scharfe M."/>
            <person name="Schoen O."/>
            <person name="Bargues M."/>
            <person name="Terol J."/>
            <person name="Climent J."/>
            <person name="Navarro P."/>
            <person name="Collado C."/>
            <person name="Perez-Perez A."/>
            <person name="Ottenwaelder B."/>
            <person name="Duchemin D."/>
            <person name="Cooke R."/>
            <person name="Laudie M."/>
            <person name="Berger-Llauro C."/>
            <person name="Purnelle B."/>
            <person name="Masuy D."/>
            <person name="de Haan M."/>
            <person name="Maarse A.C."/>
            <person name="Alcaraz J.-P."/>
            <person name="Cottet A."/>
            <person name="Casacuberta E."/>
            <person name="Monfort A."/>
            <person name="Argiriou A."/>
            <person name="Flores M."/>
            <person name="Liguori R."/>
            <person name="Vitale D."/>
            <person name="Mannhaupt G."/>
            <person name="Haase D."/>
            <person name="Schoof H."/>
            <person name="Rudd S."/>
            <person name="Zaccaria P."/>
            <person name="Mewes H.-W."/>
            <person name="Mayer K.F.X."/>
            <person name="Kaul S."/>
            <person name="Town C.D."/>
            <person name="Koo H.L."/>
            <person name="Tallon L.J."/>
            <person name="Jenkins J."/>
            <person name="Rooney T."/>
            <person name="Rizzo M."/>
            <person name="Walts A."/>
            <person name="Utterback T."/>
            <person name="Fujii C.Y."/>
            <person name="Shea T.P."/>
            <person name="Creasy T.H."/>
            <person name="Haas B."/>
            <person name="Maiti R."/>
            <person name="Wu D."/>
            <person name="Peterson J."/>
            <person name="Van Aken S."/>
            <person name="Pai G."/>
            <person name="Militscher J."/>
            <person name="Sellers P."/>
            <person name="Gill J.E."/>
            <person name="Feldblyum T.V."/>
            <person name="Preuss D."/>
            <person name="Lin X."/>
            <person name="Nierman W.C."/>
            <person name="Salzberg S.L."/>
            <person name="White O."/>
            <person name="Venter J.C."/>
            <person name="Fraser C.M."/>
            <person name="Kaneko T."/>
            <person name="Nakamura Y."/>
            <person name="Sato S."/>
            <person name="Kato T."/>
            <person name="Asamizu E."/>
            <person name="Sasamoto S."/>
            <person name="Kimura T."/>
            <person name="Idesawa K."/>
            <person name="Kawashima K."/>
            <person name="Kishida Y."/>
            <person name="Kiyokawa C."/>
            <person name="Kohara M."/>
            <person name="Matsumoto M."/>
            <person name="Matsuno A."/>
            <person name="Muraki A."/>
            <person name="Nakayama S."/>
            <person name="Nakazaki N."/>
            <person name="Shinpo S."/>
            <person name="Takeuchi C."/>
            <person name="Wada T."/>
            <person name="Watanabe A."/>
            <person name="Yamada M."/>
            <person name="Yasuda M."/>
            <person name="Tabata S."/>
        </authorList>
    </citation>
    <scope>NUCLEOTIDE SEQUENCE [LARGE SCALE GENOMIC DNA]</scope>
    <source>
        <strain>cv. Columbia</strain>
    </source>
</reference>
<reference key="2">
    <citation type="journal article" date="2017" name="Plant J.">
        <title>Araport11: a complete reannotation of the Arabidopsis thaliana reference genome.</title>
        <authorList>
            <person name="Cheng C.Y."/>
            <person name="Krishnakumar V."/>
            <person name="Chan A.P."/>
            <person name="Thibaud-Nissen F."/>
            <person name="Schobel S."/>
            <person name="Town C.D."/>
        </authorList>
    </citation>
    <scope>GENOME REANNOTATION</scope>
    <source>
        <strain>cv. Columbia</strain>
    </source>
</reference>
<reference key="3">
    <citation type="journal article" date="2004" name="Genome Res.">
        <title>Whole genome sequence comparisons and 'full-length' cDNA sequences: a combined approach to evaluate and improve Arabidopsis genome annotation.</title>
        <authorList>
            <person name="Castelli V."/>
            <person name="Aury J.-M."/>
            <person name="Jaillon O."/>
            <person name="Wincker P."/>
            <person name="Clepet C."/>
            <person name="Menard M."/>
            <person name="Cruaud C."/>
            <person name="Quetier F."/>
            <person name="Scarpelli C."/>
            <person name="Schaechter V."/>
            <person name="Temple G."/>
            <person name="Caboche M."/>
            <person name="Weissenbach J."/>
            <person name="Salanoubat M."/>
        </authorList>
    </citation>
    <scope>NUCLEOTIDE SEQUENCE [LARGE SCALE MRNA]</scope>
    <source>
        <strain>cv. Columbia</strain>
    </source>
</reference>
<sequence>MKGLVQFLVAKIILLVLASTFVHCYDPNPLQDYCVATNGTNRVFVNGKFCKDPKLVTANDFFYSGLNIPGNTSNRLGASVTDVDVRRIPGLNTLGIAIARLDFAPGGQLPPHIHPRASQIILVLKGQLSVGFVSSNDYNYTLFSKILYPGDVFAFPIGLVQFHANTGKTHAVAIGVVGSQDPGVIPIGDAVFGSNPLIDPKLLAKAFALDVNIVRHVQRVFSSEGYIVK</sequence>
<name>GL12_ARATH</name>
<keyword id="KW-0025">Alternative splicing</keyword>
<keyword id="KW-0052">Apoplast</keyword>
<keyword id="KW-1015">Disulfide bond</keyword>
<keyword id="KW-0325">Glycoprotein</keyword>
<keyword id="KW-0464">Manganese</keyword>
<keyword id="KW-0479">Metal-binding</keyword>
<keyword id="KW-1185">Reference proteome</keyword>
<keyword id="KW-0964">Secreted</keyword>
<keyword id="KW-0732">Signal</keyword>
<dbReference type="EMBL" id="AC016829">
    <property type="protein sequence ID" value="AAF26798.1"/>
    <property type="molecule type" value="Genomic_DNA"/>
</dbReference>
<dbReference type="EMBL" id="CP002686">
    <property type="protein sequence ID" value="AEE74043.1"/>
    <property type="molecule type" value="Genomic_DNA"/>
</dbReference>
<dbReference type="EMBL" id="BX825798">
    <property type="status" value="NOT_ANNOTATED_CDS"/>
    <property type="molecule type" value="mRNA"/>
</dbReference>
<dbReference type="RefSeq" id="NP_187065.1">
    <molecule id="Q9M8X1-1"/>
    <property type="nucleotide sequence ID" value="NM_111286.2"/>
</dbReference>
<dbReference type="SMR" id="Q9M8X1"/>
<dbReference type="FunCoup" id="Q9M8X1">
    <property type="interactions" value="30"/>
</dbReference>
<dbReference type="GlyGen" id="Q9M8X1">
    <property type="glycosylation" value="3 sites"/>
</dbReference>
<dbReference type="PaxDb" id="3702-AT3G04150.2"/>
<dbReference type="ProteomicsDB" id="230464">
    <molecule id="Q9M8X1-1"/>
</dbReference>
<dbReference type="EnsemblPlants" id="AT3G04150.1">
    <molecule id="Q9M8X1-1"/>
    <property type="protein sequence ID" value="AT3G04150.1"/>
    <property type="gene ID" value="AT3G04150"/>
</dbReference>
<dbReference type="GeneID" id="819570"/>
<dbReference type="Gramene" id="AT3G04150.1">
    <molecule id="Q9M8X1-1"/>
    <property type="protein sequence ID" value="AT3G04150.1"/>
    <property type="gene ID" value="AT3G04150"/>
</dbReference>
<dbReference type="KEGG" id="ath:AT3G04150"/>
<dbReference type="Araport" id="AT3G04150"/>
<dbReference type="TAIR" id="AT3G04150"/>
<dbReference type="HOGENOM" id="CLU_015790_0_0_1"/>
<dbReference type="InParanoid" id="Q9M8X1"/>
<dbReference type="OMA" id="GMPTPTN"/>
<dbReference type="OrthoDB" id="1921208at2759"/>
<dbReference type="PhylomeDB" id="Q9M8X1"/>
<dbReference type="PRO" id="PR:Q9M8X1"/>
<dbReference type="Proteomes" id="UP000006548">
    <property type="component" value="Chromosome 3"/>
</dbReference>
<dbReference type="ExpressionAtlas" id="Q9M8X1">
    <property type="expression patterns" value="baseline and differential"/>
</dbReference>
<dbReference type="GO" id="GO:0048046">
    <property type="term" value="C:apoplast"/>
    <property type="evidence" value="ECO:0007669"/>
    <property type="project" value="UniProtKB-SubCell"/>
</dbReference>
<dbReference type="GO" id="GO:0030145">
    <property type="term" value="F:manganese ion binding"/>
    <property type="evidence" value="ECO:0007669"/>
    <property type="project" value="InterPro"/>
</dbReference>
<dbReference type="CDD" id="cd02241">
    <property type="entry name" value="cupin_OxOx"/>
    <property type="match status" value="1"/>
</dbReference>
<dbReference type="FunFam" id="2.60.120.10:FF:000005">
    <property type="entry name" value="Germin-like protein subfamily 1 member 8"/>
    <property type="match status" value="1"/>
</dbReference>
<dbReference type="Gene3D" id="2.60.120.10">
    <property type="entry name" value="Jelly Rolls"/>
    <property type="match status" value="1"/>
</dbReference>
<dbReference type="InterPro" id="IPR006045">
    <property type="entry name" value="Cupin_1"/>
</dbReference>
<dbReference type="InterPro" id="IPR001929">
    <property type="entry name" value="Germin"/>
</dbReference>
<dbReference type="InterPro" id="IPR014710">
    <property type="entry name" value="RmlC-like_jellyroll"/>
</dbReference>
<dbReference type="InterPro" id="IPR011051">
    <property type="entry name" value="RmlC_Cupin_sf"/>
</dbReference>
<dbReference type="PANTHER" id="PTHR31238">
    <property type="entry name" value="GERMIN-LIKE PROTEIN SUBFAMILY 3 MEMBER 3"/>
    <property type="match status" value="1"/>
</dbReference>
<dbReference type="Pfam" id="PF00190">
    <property type="entry name" value="Cupin_1"/>
    <property type="match status" value="1"/>
</dbReference>
<dbReference type="PRINTS" id="PR00325">
    <property type="entry name" value="GERMIN"/>
</dbReference>
<dbReference type="SMART" id="SM00835">
    <property type="entry name" value="Cupin_1"/>
    <property type="match status" value="1"/>
</dbReference>
<dbReference type="SUPFAM" id="SSF51182">
    <property type="entry name" value="RmlC-like cupins"/>
    <property type="match status" value="1"/>
</dbReference>
<evidence type="ECO:0000250" key="1"/>
<evidence type="ECO:0000255" key="2"/>
<evidence type="ECO:0000305" key="3"/>
<gene>
    <name type="ordered locus">At3g04150</name>
    <name type="ORF">T6K12.23</name>
</gene>
<feature type="signal peptide" evidence="2">
    <location>
        <begin position="1"/>
        <end position="24"/>
    </location>
</feature>
<feature type="chain" id="PRO_0000010802" description="Putative germin-like protein subfamily 1 member 2">
    <location>
        <begin position="25"/>
        <end position="229"/>
    </location>
</feature>
<feature type="domain" description="Cupin type-1" evidence="2">
    <location>
        <begin position="64"/>
        <end position="215"/>
    </location>
</feature>
<feature type="binding site" evidence="1">
    <location>
        <position position="112"/>
    </location>
    <ligand>
        <name>Mn(2+)</name>
        <dbReference type="ChEBI" id="CHEBI:29035"/>
    </ligand>
</feature>
<feature type="binding site" evidence="1">
    <location>
        <position position="114"/>
    </location>
    <ligand>
        <name>Mn(2+)</name>
        <dbReference type="ChEBI" id="CHEBI:29035"/>
    </ligand>
</feature>
<feature type="binding site" evidence="1">
    <location>
        <position position="163"/>
    </location>
    <ligand>
        <name>Mn(2+)</name>
        <dbReference type="ChEBI" id="CHEBI:29035"/>
    </ligand>
</feature>
<feature type="site" description="Probable non-functional manganese-binding site">
    <location>
        <position position="119"/>
    </location>
</feature>
<feature type="glycosylation site" description="N-linked (GlcNAc...) asparagine" evidence="2">
    <location>
        <position position="38"/>
    </location>
</feature>
<feature type="glycosylation site" description="N-linked (GlcNAc...) asparagine" evidence="2">
    <location>
        <position position="71"/>
    </location>
</feature>
<feature type="glycosylation site" description="N-linked (GlcNAc...) asparagine" evidence="2">
    <location>
        <position position="139"/>
    </location>
</feature>
<feature type="disulfide bond" evidence="1">
    <location>
        <begin position="34"/>
        <end position="50"/>
    </location>
</feature>
<comment type="function">
    <text>May play a role in plant defense. Probably has no oxalate oxidase activity even if the active site is conserved.</text>
</comment>
<comment type="subunit">
    <text evidence="1">Oligomer (believed to be a pentamer but probably hexamer).</text>
</comment>
<comment type="subcellular location">
    <subcellularLocation>
        <location evidence="1">Secreted</location>
        <location evidence="1">Extracellular space</location>
        <location evidence="1">Apoplast</location>
    </subcellularLocation>
</comment>
<comment type="alternative products">
    <event type="alternative splicing"/>
    <isoform>
        <id>Q9M8X1-1</id>
        <name>1</name>
        <sequence type="displayed"/>
    </isoform>
    <text>A number of isoforms are produced. According to EST sequences.</text>
</comment>
<comment type="similarity">
    <text evidence="3">Belongs to the germin family.</text>
</comment>
<comment type="sequence caution" evidence="3">
    <conflict type="miscellaneous discrepancy">
        <sequence resource="EMBL" id="BX825798"/>
    </conflict>
    <text>Sequencing errors.</text>
</comment>
<proteinExistence type="evidence at transcript level"/>
<accession>Q9M8X1</accession>
<protein>
    <recommendedName>
        <fullName>Putative germin-like protein subfamily 1 member 2</fullName>
    </recommendedName>
</protein>
<organism>
    <name type="scientific">Arabidopsis thaliana</name>
    <name type="common">Mouse-ear cress</name>
    <dbReference type="NCBI Taxonomy" id="3702"/>
    <lineage>
        <taxon>Eukaryota</taxon>
        <taxon>Viridiplantae</taxon>
        <taxon>Streptophyta</taxon>
        <taxon>Embryophyta</taxon>
        <taxon>Tracheophyta</taxon>
        <taxon>Spermatophyta</taxon>
        <taxon>Magnoliopsida</taxon>
        <taxon>eudicotyledons</taxon>
        <taxon>Gunneridae</taxon>
        <taxon>Pentapetalae</taxon>
        <taxon>rosids</taxon>
        <taxon>malvids</taxon>
        <taxon>Brassicales</taxon>
        <taxon>Brassicaceae</taxon>
        <taxon>Camelineae</taxon>
        <taxon>Arabidopsis</taxon>
    </lineage>
</organism>